<name>RPPH_PECCP</name>
<organism>
    <name type="scientific">Pectobacterium carotovorum subsp. carotovorum (strain PC1)</name>
    <dbReference type="NCBI Taxonomy" id="561230"/>
    <lineage>
        <taxon>Bacteria</taxon>
        <taxon>Pseudomonadati</taxon>
        <taxon>Pseudomonadota</taxon>
        <taxon>Gammaproteobacteria</taxon>
        <taxon>Enterobacterales</taxon>
        <taxon>Pectobacteriaceae</taxon>
        <taxon>Pectobacterium</taxon>
    </lineage>
</organism>
<comment type="function">
    <text evidence="1">Accelerates the degradation of transcripts by removing pyrophosphate from the 5'-end of triphosphorylated RNA, leading to a more labile monophosphorylated state that can stimulate subsequent ribonuclease cleavage.</text>
</comment>
<comment type="cofactor">
    <cofactor evidence="1">
        <name>a divalent metal cation</name>
        <dbReference type="ChEBI" id="CHEBI:60240"/>
    </cofactor>
</comment>
<comment type="similarity">
    <text evidence="1">Belongs to the Nudix hydrolase family. RppH subfamily.</text>
</comment>
<dbReference type="EC" id="3.6.1.-" evidence="1"/>
<dbReference type="EMBL" id="CP001657">
    <property type="protein sequence ID" value="ACT11954.1"/>
    <property type="molecule type" value="Genomic_DNA"/>
</dbReference>
<dbReference type="RefSeq" id="WP_012773594.1">
    <property type="nucleotide sequence ID" value="NC_012917.1"/>
</dbReference>
<dbReference type="SMR" id="C6DAE6"/>
<dbReference type="STRING" id="561230.PC1_0904"/>
<dbReference type="GeneID" id="67795322"/>
<dbReference type="KEGG" id="pct:PC1_0904"/>
<dbReference type="eggNOG" id="COG0494">
    <property type="taxonomic scope" value="Bacteria"/>
</dbReference>
<dbReference type="HOGENOM" id="CLU_087195_3_2_6"/>
<dbReference type="OrthoDB" id="9816040at2"/>
<dbReference type="Proteomes" id="UP000002736">
    <property type="component" value="Chromosome"/>
</dbReference>
<dbReference type="GO" id="GO:0005737">
    <property type="term" value="C:cytoplasm"/>
    <property type="evidence" value="ECO:0007669"/>
    <property type="project" value="TreeGrafter"/>
</dbReference>
<dbReference type="GO" id="GO:0046872">
    <property type="term" value="F:metal ion binding"/>
    <property type="evidence" value="ECO:0007669"/>
    <property type="project" value="UniProtKB-KW"/>
</dbReference>
<dbReference type="GO" id="GO:0034353">
    <property type="term" value="F:mRNA 5'-diphosphatase activity"/>
    <property type="evidence" value="ECO:0007669"/>
    <property type="project" value="TreeGrafter"/>
</dbReference>
<dbReference type="GO" id="GO:0006402">
    <property type="term" value="P:mRNA catabolic process"/>
    <property type="evidence" value="ECO:0007669"/>
    <property type="project" value="TreeGrafter"/>
</dbReference>
<dbReference type="CDD" id="cd03671">
    <property type="entry name" value="NUDIX_Ap4A_hydrolase_plant_like"/>
    <property type="match status" value="1"/>
</dbReference>
<dbReference type="FunFam" id="3.90.79.10:FF:000001">
    <property type="entry name" value="RNA pyrophosphohydrolase"/>
    <property type="match status" value="1"/>
</dbReference>
<dbReference type="Gene3D" id="3.90.79.10">
    <property type="entry name" value="Nucleoside Triphosphate Pyrophosphohydrolase"/>
    <property type="match status" value="1"/>
</dbReference>
<dbReference type="HAMAP" id="MF_00298">
    <property type="entry name" value="Nudix_RppH"/>
    <property type="match status" value="1"/>
</dbReference>
<dbReference type="InterPro" id="IPR020476">
    <property type="entry name" value="Nudix_hydrolase"/>
</dbReference>
<dbReference type="InterPro" id="IPR015797">
    <property type="entry name" value="NUDIX_hydrolase-like_dom_sf"/>
</dbReference>
<dbReference type="InterPro" id="IPR020084">
    <property type="entry name" value="NUDIX_hydrolase_CS"/>
</dbReference>
<dbReference type="InterPro" id="IPR000086">
    <property type="entry name" value="NUDIX_hydrolase_dom"/>
</dbReference>
<dbReference type="InterPro" id="IPR022927">
    <property type="entry name" value="RppH"/>
</dbReference>
<dbReference type="NCBIfam" id="NF001934">
    <property type="entry name" value="PRK00714.1-1"/>
    <property type="match status" value="1"/>
</dbReference>
<dbReference type="NCBIfam" id="NF001937">
    <property type="entry name" value="PRK00714.1-4"/>
    <property type="match status" value="1"/>
</dbReference>
<dbReference type="NCBIfam" id="NF001938">
    <property type="entry name" value="PRK00714.1-5"/>
    <property type="match status" value="1"/>
</dbReference>
<dbReference type="PANTHER" id="PTHR23114">
    <property type="entry name" value="M7GPPPN-MRNA HYDROLASE"/>
    <property type="match status" value="1"/>
</dbReference>
<dbReference type="PANTHER" id="PTHR23114:SF17">
    <property type="entry name" value="M7GPPPN-MRNA HYDROLASE"/>
    <property type="match status" value="1"/>
</dbReference>
<dbReference type="Pfam" id="PF00293">
    <property type="entry name" value="NUDIX"/>
    <property type="match status" value="1"/>
</dbReference>
<dbReference type="PRINTS" id="PR00502">
    <property type="entry name" value="NUDIXFAMILY"/>
</dbReference>
<dbReference type="SUPFAM" id="SSF55811">
    <property type="entry name" value="Nudix"/>
    <property type="match status" value="1"/>
</dbReference>
<dbReference type="PROSITE" id="PS51462">
    <property type="entry name" value="NUDIX"/>
    <property type="match status" value="1"/>
</dbReference>
<dbReference type="PROSITE" id="PS00893">
    <property type="entry name" value="NUDIX_BOX"/>
    <property type="match status" value="1"/>
</dbReference>
<reference key="1">
    <citation type="submission" date="2009-07" db="EMBL/GenBank/DDBJ databases">
        <title>Complete sequence of Pectobacterium carotovorum subsp. carotovorum PC1.</title>
        <authorList>
            <consortium name="US DOE Joint Genome Institute"/>
            <person name="Lucas S."/>
            <person name="Copeland A."/>
            <person name="Lapidus A."/>
            <person name="Glavina del Rio T."/>
            <person name="Tice H."/>
            <person name="Bruce D."/>
            <person name="Goodwin L."/>
            <person name="Pitluck S."/>
            <person name="Munk A.C."/>
            <person name="Brettin T."/>
            <person name="Detter J.C."/>
            <person name="Han C."/>
            <person name="Tapia R."/>
            <person name="Larimer F."/>
            <person name="Land M."/>
            <person name="Hauser L."/>
            <person name="Kyrpides N."/>
            <person name="Mikhailova N."/>
            <person name="Balakrishnan V."/>
            <person name="Glasner J."/>
            <person name="Perna N.T."/>
        </authorList>
    </citation>
    <scope>NUCLEOTIDE SEQUENCE [LARGE SCALE GENOMIC DNA]</scope>
    <source>
        <strain>PC1</strain>
    </source>
</reference>
<sequence length="177" mass="20912">MIDDDGYRPNVGIVICNRQGQVMWARRYGQHSWQFPQGGINPGESAEQAMYRELFEEVGLRKKDVRVLASTRNWLRYKLPKRLVRWDTKPVCIGQKQKWFLLQLMCNESDINMQSSGTPEFDGWRWVSYWYPVRQVVSFKRDVYRRVMKEFINPVILLQESVAARVATPSGPRRKRG</sequence>
<keyword id="KW-0378">Hydrolase</keyword>
<keyword id="KW-0479">Metal-binding</keyword>
<accession>C6DAE6</accession>
<feature type="chain" id="PRO_1000204936" description="RNA pyrophosphohydrolase">
    <location>
        <begin position="1"/>
        <end position="177"/>
    </location>
</feature>
<feature type="domain" description="Nudix hydrolase" evidence="1">
    <location>
        <begin position="6"/>
        <end position="149"/>
    </location>
</feature>
<feature type="short sequence motif" description="Nudix box">
    <location>
        <begin position="38"/>
        <end position="59"/>
    </location>
</feature>
<gene>
    <name evidence="1" type="primary">rppH</name>
    <name evidence="1" type="synonym">nudH</name>
    <name type="ordered locus">PC1_0904</name>
</gene>
<evidence type="ECO:0000255" key="1">
    <source>
        <dbReference type="HAMAP-Rule" id="MF_00298"/>
    </source>
</evidence>
<proteinExistence type="inferred from homology"/>
<protein>
    <recommendedName>
        <fullName evidence="1">RNA pyrophosphohydrolase</fullName>
        <ecNumber evidence="1">3.6.1.-</ecNumber>
    </recommendedName>
    <alternativeName>
        <fullName evidence="1">(Di)nucleoside polyphosphate hydrolase</fullName>
    </alternativeName>
</protein>